<sequence length="316" mass="34967">MKIVKISPRGYCYGVVDAMVIARNAALDTSLPRPIYILGMIVHNKHVTDAFEEDGIITLDGPSRLDILDKIDSGTVIFTAHGVSPEVKQRAKEKGLTTIDATCPDVTKTHDLIEAKKAEGYHVIYIGKKNHPEPEGAVGIAPDIVHLIERADDLKTLEIPTDKILVTNQTTMSQWDVQHLMEDIQKKFPTAEFHKEICLATQVRQEAVAKQADVADLTIVVGDPKSNNSNRLAQVSQEIAGTKAYRVADVSEIKLEWLQGVENVAVTAGASTPTPITKEVIAFLEQYDPMNPATWERVRKVPLQKILPRVKVKKEQ</sequence>
<feature type="chain" id="PRO_1000124274" description="4-hydroxy-3-methylbut-2-enyl diphosphate reductase">
    <location>
        <begin position="1"/>
        <end position="316"/>
    </location>
</feature>
<feature type="active site" description="Proton donor" evidence="1">
    <location>
        <position position="133"/>
    </location>
</feature>
<feature type="binding site" evidence="1">
    <location>
        <position position="12"/>
    </location>
    <ligand>
        <name>[4Fe-4S] cluster</name>
        <dbReference type="ChEBI" id="CHEBI:49883"/>
    </ligand>
</feature>
<feature type="binding site" evidence="1">
    <location>
        <position position="43"/>
    </location>
    <ligand>
        <name>(2E)-4-hydroxy-3-methylbut-2-enyl diphosphate</name>
        <dbReference type="ChEBI" id="CHEBI:128753"/>
    </ligand>
</feature>
<feature type="binding site" evidence="1">
    <location>
        <position position="43"/>
    </location>
    <ligand>
        <name>dimethylallyl diphosphate</name>
        <dbReference type="ChEBI" id="CHEBI:57623"/>
    </ligand>
</feature>
<feature type="binding site" evidence="1">
    <location>
        <position position="43"/>
    </location>
    <ligand>
        <name>isopentenyl diphosphate</name>
        <dbReference type="ChEBI" id="CHEBI:128769"/>
    </ligand>
</feature>
<feature type="binding site" evidence="1">
    <location>
        <position position="81"/>
    </location>
    <ligand>
        <name>(2E)-4-hydroxy-3-methylbut-2-enyl diphosphate</name>
        <dbReference type="ChEBI" id="CHEBI:128753"/>
    </ligand>
</feature>
<feature type="binding site" evidence="1">
    <location>
        <position position="81"/>
    </location>
    <ligand>
        <name>dimethylallyl diphosphate</name>
        <dbReference type="ChEBI" id="CHEBI:57623"/>
    </ligand>
</feature>
<feature type="binding site" evidence="1">
    <location>
        <position position="81"/>
    </location>
    <ligand>
        <name>isopentenyl diphosphate</name>
        <dbReference type="ChEBI" id="CHEBI:128769"/>
    </ligand>
</feature>
<feature type="binding site" evidence="1">
    <location>
        <position position="103"/>
    </location>
    <ligand>
        <name>[4Fe-4S] cluster</name>
        <dbReference type="ChEBI" id="CHEBI:49883"/>
    </ligand>
</feature>
<feature type="binding site" evidence="1">
    <location>
        <position position="131"/>
    </location>
    <ligand>
        <name>(2E)-4-hydroxy-3-methylbut-2-enyl diphosphate</name>
        <dbReference type="ChEBI" id="CHEBI:128753"/>
    </ligand>
</feature>
<feature type="binding site" evidence="1">
    <location>
        <position position="131"/>
    </location>
    <ligand>
        <name>dimethylallyl diphosphate</name>
        <dbReference type="ChEBI" id="CHEBI:57623"/>
    </ligand>
</feature>
<feature type="binding site" evidence="1">
    <location>
        <position position="131"/>
    </location>
    <ligand>
        <name>isopentenyl diphosphate</name>
        <dbReference type="ChEBI" id="CHEBI:128769"/>
    </ligand>
</feature>
<feature type="binding site" evidence="1">
    <location>
        <position position="170"/>
    </location>
    <ligand>
        <name>(2E)-4-hydroxy-3-methylbut-2-enyl diphosphate</name>
        <dbReference type="ChEBI" id="CHEBI:128753"/>
    </ligand>
</feature>
<feature type="binding site" evidence="1">
    <location>
        <position position="198"/>
    </location>
    <ligand>
        <name>[4Fe-4S] cluster</name>
        <dbReference type="ChEBI" id="CHEBI:49883"/>
    </ligand>
</feature>
<feature type="binding site" evidence="1">
    <location>
        <position position="226"/>
    </location>
    <ligand>
        <name>(2E)-4-hydroxy-3-methylbut-2-enyl diphosphate</name>
        <dbReference type="ChEBI" id="CHEBI:128753"/>
    </ligand>
</feature>
<feature type="binding site" evidence="1">
    <location>
        <position position="226"/>
    </location>
    <ligand>
        <name>dimethylallyl diphosphate</name>
        <dbReference type="ChEBI" id="CHEBI:57623"/>
    </ligand>
</feature>
<feature type="binding site" evidence="1">
    <location>
        <position position="226"/>
    </location>
    <ligand>
        <name>isopentenyl diphosphate</name>
        <dbReference type="ChEBI" id="CHEBI:128769"/>
    </ligand>
</feature>
<feature type="binding site" evidence="1">
    <location>
        <position position="228"/>
    </location>
    <ligand>
        <name>(2E)-4-hydroxy-3-methylbut-2-enyl diphosphate</name>
        <dbReference type="ChEBI" id="CHEBI:128753"/>
    </ligand>
</feature>
<feature type="binding site" evidence="1">
    <location>
        <position position="228"/>
    </location>
    <ligand>
        <name>dimethylallyl diphosphate</name>
        <dbReference type="ChEBI" id="CHEBI:57623"/>
    </ligand>
</feature>
<feature type="binding site" evidence="1">
    <location>
        <position position="228"/>
    </location>
    <ligand>
        <name>isopentenyl diphosphate</name>
        <dbReference type="ChEBI" id="CHEBI:128769"/>
    </ligand>
</feature>
<feature type="binding site" evidence="1">
    <location>
        <position position="271"/>
    </location>
    <ligand>
        <name>(2E)-4-hydroxy-3-methylbut-2-enyl diphosphate</name>
        <dbReference type="ChEBI" id="CHEBI:128753"/>
    </ligand>
</feature>
<feature type="binding site" evidence="1">
    <location>
        <position position="271"/>
    </location>
    <ligand>
        <name>dimethylallyl diphosphate</name>
        <dbReference type="ChEBI" id="CHEBI:57623"/>
    </ligand>
</feature>
<feature type="binding site" evidence="1">
    <location>
        <position position="271"/>
    </location>
    <ligand>
        <name>isopentenyl diphosphate</name>
        <dbReference type="ChEBI" id="CHEBI:128769"/>
    </ligand>
</feature>
<comment type="function">
    <text evidence="1">Catalyzes the conversion of 1-hydroxy-2-methyl-2-(E)-butenyl 4-diphosphate (HMBPP) into a mixture of isopentenyl diphosphate (IPP) and dimethylallyl diphosphate (DMAPP). Acts in the terminal step of the DOXP/MEP pathway for isoprenoid precursor biosynthesis.</text>
</comment>
<comment type="catalytic activity">
    <reaction evidence="1">
        <text>isopentenyl diphosphate + 2 oxidized [2Fe-2S]-[ferredoxin] + H2O = (2E)-4-hydroxy-3-methylbut-2-enyl diphosphate + 2 reduced [2Fe-2S]-[ferredoxin] + 2 H(+)</text>
        <dbReference type="Rhea" id="RHEA:24488"/>
        <dbReference type="Rhea" id="RHEA-COMP:10000"/>
        <dbReference type="Rhea" id="RHEA-COMP:10001"/>
        <dbReference type="ChEBI" id="CHEBI:15377"/>
        <dbReference type="ChEBI" id="CHEBI:15378"/>
        <dbReference type="ChEBI" id="CHEBI:33737"/>
        <dbReference type="ChEBI" id="CHEBI:33738"/>
        <dbReference type="ChEBI" id="CHEBI:128753"/>
        <dbReference type="ChEBI" id="CHEBI:128769"/>
        <dbReference type="EC" id="1.17.7.4"/>
    </reaction>
</comment>
<comment type="catalytic activity">
    <reaction evidence="1">
        <text>dimethylallyl diphosphate + 2 oxidized [2Fe-2S]-[ferredoxin] + H2O = (2E)-4-hydroxy-3-methylbut-2-enyl diphosphate + 2 reduced [2Fe-2S]-[ferredoxin] + 2 H(+)</text>
        <dbReference type="Rhea" id="RHEA:24825"/>
        <dbReference type="Rhea" id="RHEA-COMP:10000"/>
        <dbReference type="Rhea" id="RHEA-COMP:10001"/>
        <dbReference type="ChEBI" id="CHEBI:15377"/>
        <dbReference type="ChEBI" id="CHEBI:15378"/>
        <dbReference type="ChEBI" id="CHEBI:33737"/>
        <dbReference type="ChEBI" id="CHEBI:33738"/>
        <dbReference type="ChEBI" id="CHEBI:57623"/>
        <dbReference type="ChEBI" id="CHEBI:128753"/>
        <dbReference type="EC" id="1.17.7.4"/>
    </reaction>
</comment>
<comment type="cofactor">
    <cofactor evidence="1">
        <name>[4Fe-4S] cluster</name>
        <dbReference type="ChEBI" id="CHEBI:49883"/>
    </cofactor>
    <text evidence="1">Binds 1 [4Fe-4S] cluster per subunit.</text>
</comment>
<comment type="pathway">
    <text evidence="1">Isoprenoid biosynthesis; dimethylallyl diphosphate biosynthesis; dimethylallyl diphosphate from (2E)-4-hydroxy-3-methylbutenyl diphosphate: step 1/1.</text>
</comment>
<comment type="pathway">
    <text evidence="1">Isoprenoid biosynthesis; isopentenyl diphosphate biosynthesis via DXP pathway; isopentenyl diphosphate from 1-deoxy-D-xylulose 5-phosphate: step 6/6.</text>
</comment>
<comment type="similarity">
    <text evidence="1">Belongs to the IspH family.</text>
</comment>
<accession>C3LKW7</accession>
<protein>
    <recommendedName>
        <fullName evidence="1">4-hydroxy-3-methylbut-2-enyl diphosphate reductase</fullName>
        <shortName evidence="1">HMBPP reductase</shortName>
        <ecNumber evidence="1">1.17.7.4</ecNumber>
    </recommendedName>
</protein>
<proteinExistence type="inferred from homology"/>
<reference key="1">
    <citation type="submission" date="2008-10" db="EMBL/GenBank/DDBJ databases">
        <title>Genome sequence of Bacillus anthracis str. CDC 684.</title>
        <authorList>
            <person name="Dodson R.J."/>
            <person name="Munk A.C."/>
            <person name="Brettin T."/>
            <person name="Bruce D."/>
            <person name="Detter C."/>
            <person name="Tapia R."/>
            <person name="Han C."/>
            <person name="Sutton G."/>
            <person name="Sims D."/>
        </authorList>
    </citation>
    <scope>NUCLEOTIDE SEQUENCE [LARGE SCALE GENOMIC DNA]</scope>
    <source>
        <strain>CDC 684 / NRRL 3495</strain>
    </source>
</reference>
<gene>
    <name evidence="1" type="primary">ispH</name>
    <name type="ordered locus">BAMEG_4550</name>
</gene>
<organism>
    <name type="scientific">Bacillus anthracis (strain CDC 684 / NRRL 3495)</name>
    <dbReference type="NCBI Taxonomy" id="568206"/>
    <lineage>
        <taxon>Bacteria</taxon>
        <taxon>Bacillati</taxon>
        <taxon>Bacillota</taxon>
        <taxon>Bacilli</taxon>
        <taxon>Bacillales</taxon>
        <taxon>Bacillaceae</taxon>
        <taxon>Bacillus</taxon>
        <taxon>Bacillus cereus group</taxon>
    </lineage>
</organism>
<evidence type="ECO:0000255" key="1">
    <source>
        <dbReference type="HAMAP-Rule" id="MF_00191"/>
    </source>
</evidence>
<keyword id="KW-0004">4Fe-4S</keyword>
<keyword id="KW-0408">Iron</keyword>
<keyword id="KW-0411">Iron-sulfur</keyword>
<keyword id="KW-0414">Isoprene biosynthesis</keyword>
<keyword id="KW-0479">Metal-binding</keyword>
<keyword id="KW-0560">Oxidoreductase</keyword>
<dbReference type="EC" id="1.17.7.4" evidence="1"/>
<dbReference type="EMBL" id="CP001215">
    <property type="protein sequence ID" value="ACP15397.1"/>
    <property type="molecule type" value="Genomic_DNA"/>
</dbReference>
<dbReference type="RefSeq" id="WP_000706669.1">
    <property type="nucleotide sequence ID" value="NC_012581.1"/>
</dbReference>
<dbReference type="SMR" id="C3LKW7"/>
<dbReference type="KEGG" id="bah:BAMEG_4550"/>
<dbReference type="HOGENOM" id="CLU_027486_0_0_9"/>
<dbReference type="UniPathway" id="UPA00056">
    <property type="reaction ID" value="UER00097"/>
</dbReference>
<dbReference type="UniPathway" id="UPA00059">
    <property type="reaction ID" value="UER00105"/>
</dbReference>
<dbReference type="GO" id="GO:0051539">
    <property type="term" value="F:4 iron, 4 sulfur cluster binding"/>
    <property type="evidence" value="ECO:0007669"/>
    <property type="project" value="UniProtKB-UniRule"/>
</dbReference>
<dbReference type="GO" id="GO:0051745">
    <property type="term" value="F:4-hydroxy-3-methylbut-2-enyl diphosphate reductase activity"/>
    <property type="evidence" value="ECO:0007669"/>
    <property type="project" value="UniProtKB-UniRule"/>
</dbReference>
<dbReference type="GO" id="GO:0046872">
    <property type="term" value="F:metal ion binding"/>
    <property type="evidence" value="ECO:0007669"/>
    <property type="project" value="UniProtKB-KW"/>
</dbReference>
<dbReference type="GO" id="GO:0050992">
    <property type="term" value="P:dimethylallyl diphosphate biosynthetic process"/>
    <property type="evidence" value="ECO:0007669"/>
    <property type="project" value="UniProtKB-UniRule"/>
</dbReference>
<dbReference type="GO" id="GO:0019288">
    <property type="term" value="P:isopentenyl diphosphate biosynthetic process, methylerythritol 4-phosphate pathway"/>
    <property type="evidence" value="ECO:0007669"/>
    <property type="project" value="UniProtKB-UniRule"/>
</dbReference>
<dbReference type="GO" id="GO:0016114">
    <property type="term" value="P:terpenoid biosynthetic process"/>
    <property type="evidence" value="ECO:0007669"/>
    <property type="project" value="UniProtKB-UniRule"/>
</dbReference>
<dbReference type="CDD" id="cd13944">
    <property type="entry name" value="lytB_ispH"/>
    <property type="match status" value="1"/>
</dbReference>
<dbReference type="Gene3D" id="3.40.50.11270">
    <property type="match status" value="1"/>
</dbReference>
<dbReference type="Gene3D" id="3.40.1010.20">
    <property type="entry name" value="4-hydroxy-3-methylbut-2-enyl diphosphate reductase, catalytic domain"/>
    <property type="match status" value="2"/>
</dbReference>
<dbReference type="HAMAP" id="MF_00191">
    <property type="entry name" value="IspH"/>
    <property type="match status" value="1"/>
</dbReference>
<dbReference type="InterPro" id="IPR003451">
    <property type="entry name" value="LytB/IspH"/>
</dbReference>
<dbReference type="NCBIfam" id="TIGR00216">
    <property type="entry name" value="ispH_lytB"/>
    <property type="match status" value="1"/>
</dbReference>
<dbReference type="NCBIfam" id="NF002187">
    <property type="entry name" value="PRK01045.1-1"/>
    <property type="match status" value="1"/>
</dbReference>
<dbReference type="PANTHER" id="PTHR30426">
    <property type="entry name" value="4-HYDROXY-3-METHYLBUT-2-ENYL DIPHOSPHATE REDUCTASE"/>
    <property type="match status" value="1"/>
</dbReference>
<dbReference type="PANTHER" id="PTHR30426:SF0">
    <property type="entry name" value="4-HYDROXY-3-METHYLBUT-2-ENYL DIPHOSPHATE REDUCTASE"/>
    <property type="match status" value="1"/>
</dbReference>
<dbReference type="Pfam" id="PF02401">
    <property type="entry name" value="LYTB"/>
    <property type="match status" value="1"/>
</dbReference>
<name>ISPH_BACAC</name>